<keyword id="KW-0009">Actin-binding</keyword>
<keyword id="KW-0067">ATP-binding</keyword>
<keyword id="KW-0112">Calmodulin-binding</keyword>
<keyword id="KW-0505">Motor protein</keyword>
<keyword id="KW-0518">Myosin</keyword>
<keyword id="KW-0547">Nucleotide-binding</keyword>
<keyword id="KW-0597">Phosphoprotein</keyword>
<keyword id="KW-1185">Reference proteome</keyword>
<keyword id="KW-0677">Repeat</keyword>
<comment type="function">
    <text evidence="7">Involved in directing the movement of organelles along actin filaments.</text>
</comment>
<comment type="PTM">
    <text evidence="2">Phosphorylated by ALPK1.</text>
</comment>
<comment type="similarity">
    <text evidence="7">Belongs to the TRAFAC class myosin-kinesin ATPase superfamily. Myosin family.</text>
</comment>
<comment type="caution">
    <text evidence="7">Represents an unconventional myosin. This protein should not be confused with the conventional myosin-1 (MYH1).</text>
</comment>
<name>MYO1A_BOVIN</name>
<accession>P10568</accession>
<accession>Q2KJJ6</accession>
<accession>Q9TS38</accession>
<organism>
    <name type="scientific">Bos taurus</name>
    <name type="common">Bovine</name>
    <dbReference type="NCBI Taxonomy" id="9913"/>
    <lineage>
        <taxon>Eukaryota</taxon>
        <taxon>Metazoa</taxon>
        <taxon>Chordata</taxon>
        <taxon>Craniata</taxon>
        <taxon>Vertebrata</taxon>
        <taxon>Euteleostomi</taxon>
        <taxon>Mammalia</taxon>
        <taxon>Eutheria</taxon>
        <taxon>Laurasiatheria</taxon>
        <taxon>Artiodactyla</taxon>
        <taxon>Ruminantia</taxon>
        <taxon>Pecora</taxon>
        <taxon>Bovidae</taxon>
        <taxon>Bovinae</taxon>
        <taxon>Bos</taxon>
    </lineage>
</organism>
<proteinExistence type="evidence at transcript level"/>
<feature type="chain" id="PRO_0000123437" description="Unconventional myosin-Ia">
    <location>
        <begin position="1"/>
        <end position="1043"/>
    </location>
</feature>
<feature type="domain" description="Myosin motor" evidence="5">
    <location>
        <begin position="8"/>
        <end position="694"/>
    </location>
</feature>
<feature type="domain" description="IQ 1" evidence="4">
    <location>
        <begin position="697"/>
        <end position="719"/>
    </location>
</feature>
<feature type="domain" description="IQ 2" evidence="4">
    <location>
        <begin position="720"/>
        <end position="742"/>
    </location>
</feature>
<feature type="domain" description="IQ 3" evidence="4">
    <location>
        <begin position="743"/>
        <end position="772"/>
    </location>
</feature>
<feature type="domain" description="TH1" evidence="6">
    <location>
        <begin position="858"/>
        <end position="1042"/>
    </location>
</feature>
<feature type="region of interest" description="Actin-binding" evidence="3">
    <location>
        <begin position="571"/>
        <end position="593"/>
    </location>
</feature>
<feature type="binding site" evidence="1">
    <location>
        <begin position="101"/>
        <end position="108"/>
    </location>
    <ligand>
        <name>ATP</name>
        <dbReference type="ChEBI" id="CHEBI:30616"/>
    </ligand>
</feature>
<feature type="sequence conflict" description="In Ref. 2; AAI05313." evidence="7" ref="2">
    <original>A</original>
    <variation>D</variation>
    <location>
        <position position="242"/>
    </location>
</feature>
<feature type="sequence conflict" description="In Ref. 3." evidence="7" ref="3">
    <location>
        <position position="708"/>
    </location>
</feature>
<feature type="sequence conflict" description="In Ref. 2; AAI05313." evidence="7" ref="2">
    <original>R</original>
    <variation>S</variation>
    <location>
        <position position="822"/>
    </location>
</feature>
<dbReference type="EMBL" id="J02819">
    <property type="protein sequence ID" value="AAA30658.1"/>
    <property type="molecule type" value="mRNA"/>
</dbReference>
<dbReference type="EMBL" id="BC105312">
    <property type="protein sequence ID" value="AAI05313.1"/>
    <property type="molecule type" value="mRNA"/>
</dbReference>
<dbReference type="PIR" id="A29483">
    <property type="entry name" value="A29483"/>
</dbReference>
<dbReference type="RefSeq" id="NP_776820.1">
    <property type="nucleotide sequence ID" value="NM_174395.3"/>
</dbReference>
<dbReference type="RefSeq" id="XP_005206567.1">
    <property type="nucleotide sequence ID" value="XM_005206510.5"/>
</dbReference>
<dbReference type="SMR" id="P10568"/>
<dbReference type="FunCoup" id="P10568">
    <property type="interactions" value="70"/>
</dbReference>
<dbReference type="STRING" id="9913.ENSBTAP00000068102"/>
<dbReference type="PaxDb" id="9913-ENSBTAP00000019518"/>
<dbReference type="PeptideAtlas" id="P10568"/>
<dbReference type="Ensembl" id="ENSBTAT00000019518.6">
    <property type="protein sequence ID" value="ENSBTAP00000019518.5"/>
    <property type="gene ID" value="ENSBTAG00000014655.7"/>
</dbReference>
<dbReference type="GeneID" id="281936"/>
<dbReference type="KEGG" id="bta:281936"/>
<dbReference type="CTD" id="4640"/>
<dbReference type="VEuPathDB" id="HostDB:ENSBTAG00000014655"/>
<dbReference type="VGNC" id="VGNC:31816">
    <property type="gene designation" value="MYO1A"/>
</dbReference>
<dbReference type="eggNOG" id="KOG0164">
    <property type="taxonomic scope" value="Eukaryota"/>
</dbReference>
<dbReference type="GeneTree" id="ENSGT00940000160660"/>
<dbReference type="HOGENOM" id="CLU_000192_7_7_1"/>
<dbReference type="InParanoid" id="P10568"/>
<dbReference type="OMA" id="IKPNEYQ"/>
<dbReference type="OrthoDB" id="10055605at2759"/>
<dbReference type="TreeFam" id="TF312960"/>
<dbReference type="Proteomes" id="UP000009136">
    <property type="component" value="Chromosome 5"/>
</dbReference>
<dbReference type="Bgee" id="ENSBTAG00000014655">
    <property type="expression patterns" value="Expressed in jejunum and 82 other cell types or tissues"/>
</dbReference>
<dbReference type="GO" id="GO:0015629">
    <property type="term" value="C:actin cytoskeleton"/>
    <property type="evidence" value="ECO:0000318"/>
    <property type="project" value="GO_Central"/>
</dbReference>
<dbReference type="GO" id="GO:0016323">
    <property type="term" value="C:basolateral plasma membrane"/>
    <property type="evidence" value="ECO:0000250"/>
    <property type="project" value="UniProtKB"/>
</dbReference>
<dbReference type="GO" id="GO:0005903">
    <property type="term" value="C:brush border"/>
    <property type="evidence" value="ECO:0000250"/>
    <property type="project" value="UniProtKB"/>
</dbReference>
<dbReference type="GO" id="GO:0030864">
    <property type="term" value="C:cortical actin cytoskeleton"/>
    <property type="evidence" value="ECO:0000250"/>
    <property type="project" value="UniProtKB"/>
</dbReference>
<dbReference type="GO" id="GO:0005737">
    <property type="term" value="C:cytoplasm"/>
    <property type="evidence" value="ECO:0000250"/>
    <property type="project" value="UniProtKB"/>
</dbReference>
<dbReference type="GO" id="GO:0031941">
    <property type="term" value="C:filamentous actin"/>
    <property type="evidence" value="ECO:0000250"/>
    <property type="project" value="UniProtKB"/>
</dbReference>
<dbReference type="GO" id="GO:0016328">
    <property type="term" value="C:lateral plasma membrane"/>
    <property type="evidence" value="ECO:0000250"/>
    <property type="project" value="UniProtKB"/>
</dbReference>
<dbReference type="GO" id="GO:0005902">
    <property type="term" value="C:microvillus"/>
    <property type="evidence" value="ECO:0000250"/>
    <property type="project" value="UniProtKB"/>
</dbReference>
<dbReference type="GO" id="GO:0016459">
    <property type="term" value="C:myosin complex"/>
    <property type="evidence" value="ECO:0007669"/>
    <property type="project" value="UniProtKB-KW"/>
</dbReference>
<dbReference type="GO" id="GO:0005886">
    <property type="term" value="C:plasma membrane"/>
    <property type="evidence" value="ECO:0000318"/>
    <property type="project" value="GO_Central"/>
</dbReference>
<dbReference type="GO" id="GO:0051015">
    <property type="term" value="F:actin filament binding"/>
    <property type="evidence" value="ECO:0000318"/>
    <property type="project" value="GO_Central"/>
</dbReference>
<dbReference type="GO" id="GO:0005524">
    <property type="term" value="F:ATP binding"/>
    <property type="evidence" value="ECO:0007669"/>
    <property type="project" value="UniProtKB-KW"/>
</dbReference>
<dbReference type="GO" id="GO:0005516">
    <property type="term" value="F:calmodulin binding"/>
    <property type="evidence" value="ECO:0007669"/>
    <property type="project" value="UniProtKB-KW"/>
</dbReference>
<dbReference type="GO" id="GO:0000146">
    <property type="term" value="F:microfilament motor activity"/>
    <property type="evidence" value="ECO:0000318"/>
    <property type="project" value="GO_Central"/>
</dbReference>
<dbReference type="GO" id="GO:0007015">
    <property type="term" value="P:actin filament organization"/>
    <property type="evidence" value="ECO:0000318"/>
    <property type="project" value="GO_Central"/>
</dbReference>
<dbReference type="GO" id="GO:0030048">
    <property type="term" value="P:actin filament-based movement"/>
    <property type="evidence" value="ECO:0000318"/>
    <property type="project" value="GO_Central"/>
</dbReference>
<dbReference type="GO" id="GO:0006897">
    <property type="term" value="P:endocytosis"/>
    <property type="evidence" value="ECO:0000318"/>
    <property type="project" value="GO_Central"/>
</dbReference>
<dbReference type="GO" id="GO:0007605">
    <property type="term" value="P:sensory perception of sound"/>
    <property type="evidence" value="ECO:0000250"/>
    <property type="project" value="UniProtKB"/>
</dbReference>
<dbReference type="GO" id="GO:0051648">
    <property type="term" value="P:vesicle localization"/>
    <property type="evidence" value="ECO:0000250"/>
    <property type="project" value="UniProtKB"/>
</dbReference>
<dbReference type="CDD" id="cd23767">
    <property type="entry name" value="IQCD"/>
    <property type="match status" value="1"/>
</dbReference>
<dbReference type="CDD" id="cd01378">
    <property type="entry name" value="MYSc_Myo1"/>
    <property type="match status" value="1"/>
</dbReference>
<dbReference type="FunFam" id="1.10.10.820:FF:000001">
    <property type="entry name" value="Myosin heavy chain"/>
    <property type="match status" value="1"/>
</dbReference>
<dbReference type="FunFam" id="1.20.58.530:FF:000004">
    <property type="entry name" value="Unconventional myosin ID"/>
    <property type="match status" value="1"/>
</dbReference>
<dbReference type="FunFam" id="1.20.5.190:FF:000043">
    <property type="entry name" value="unconventional myosin-Ia isoform X1"/>
    <property type="match status" value="1"/>
</dbReference>
<dbReference type="FunFam" id="1.20.120.720:FF:000004">
    <property type="entry name" value="unconventional myosin-Ib isoform X1"/>
    <property type="match status" value="1"/>
</dbReference>
<dbReference type="Gene3D" id="1.10.10.820">
    <property type="match status" value="1"/>
</dbReference>
<dbReference type="Gene3D" id="1.20.5.190">
    <property type="match status" value="1"/>
</dbReference>
<dbReference type="Gene3D" id="1.20.58.530">
    <property type="match status" value="1"/>
</dbReference>
<dbReference type="Gene3D" id="6.20.240.20">
    <property type="match status" value="1"/>
</dbReference>
<dbReference type="Gene3D" id="3.40.850.10">
    <property type="entry name" value="Kinesin motor domain"/>
    <property type="match status" value="1"/>
</dbReference>
<dbReference type="Gene3D" id="1.20.120.720">
    <property type="entry name" value="Myosin VI head, motor domain, U50 subdomain"/>
    <property type="match status" value="1"/>
</dbReference>
<dbReference type="InterPro" id="IPR000048">
    <property type="entry name" value="IQ_motif_EF-hand-BS"/>
</dbReference>
<dbReference type="InterPro" id="IPR036961">
    <property type="entry name" value="Kinesin_motor_dom_sf"/>
</dbReference>
<dbReference type="InterPro" id="IPR001609">
    <property type="entry name" value="Myosin_head_motor_dom-like"/>
</dbReference>
<dbReference type="InterPro" id="IPR010926">
    <property type="entry name" value="Myosin_TH1"/>
</dbReference>
<dbReference type="InterPro" id="IPR036072">
    <property type="entry name" value="MYSc_Myo1"/>
</dbReference>
<dbReference type="InterPro" id="IPR027417">
    <property type="entry name" value="P-loop_NTPase"/>
</dbReference>
<dbReference type="PANTHER" id="PTHR13140">
    <property type="entry name" value="MYOSIN"/>
    <property type="match status" value="1"/>
</dbReference>
<dbReference type="PANTHER" id="PTHR13140:SF291">
    <property type="entry name" value="UNCONVENTIONAL MYOSIN-IA"/>
    <property type="match status" value="1"/>
</dbReference>
<dbReference type="Pfam" id="PF00612">
    <property type="entry name" value="IQ"/>
    <property type="match status" value="2"/>
</dbReference>
<dbReference type="Pfam" id="PF00063">
    <property type="entry name" value="Myosin_head"/>
    <property type="match status" value="1"/>
</dbReference>
<dbReference type="Pfam" id="PF06017">
    <property type="entry name" value="Myosin_TH1"/>
    <property type="match status" value="1"/>
</dbReference>
<dbReference type="PRINTS" id="PR00193">
    <property type="entry name" value="MYOSINHEAVY"/>
</dbReference>
<dbReference type="SMART" id="SM00015">
    <property type="entry name" value="IQ"/>
    <property type="match status" value="3"/>
</dbReference>
<dbReference type="SMART" id="SM00242">
    <property type="entry name" value="MYSc"/>
    <property type="match status" value="1"/>
</dbReference>
<dbReference type="SUPFAM" id="SSF52540">
    <property type="entry name" value="P-loop containing nucleoside triphosphate hydrolases"/>
    <property type="match status" value="1"/>
</dbReference>
<dbReference type="PROSITE" id="PS50096">
    <property type="entry name" value="IQ"/>
    <property type="match status" value="3"/>
</dbReference>
<dbReference type="PROSITE" id="PS51456">
    <property type="entry name" value="MYOSIN_MOTOR"/>
    <property type="match status" value="1"/>
</dbReference>
<dbReference type="PROSITE" id="PS51757">
    <property type="entry name" value="TH1"/>
    <property type="match status" value="1"/>
</dbReference>
<gene>
    <name type="primary">MYO1A</name>
    <name type="synonym">MYHL</name>
</gene>
<reference key="1">
    <citation type="journal article" date="1987" name="J. Biol. Chem.">
        <title>Identification of a new type of mammalian myosin heavy chain by molecular cloning. Overlap of its mRNA with preprotachykinin B mRNA.</title>
        <authorList>
            <person name="Hoshimaru M."/>
            <person name="Nakanishi S."/>
        </authorList>
    </citation>
    <scope>NUCLEOTIDE SEQUENCE [MRNA]</scope>
</reference>
<reference key="2">
    <citation type="submission" date="2005-09" db="EMBL/GenBank/DDBJ databases">
        <authorList>
            <consortium name="NIH - Mammalian Gene Collection (MGC) project"/>
        </authorList>
    </citation>
    <scope>NUCLEOTIDE SEQUENCE [LARGE SCALE MRNA]</scope>
    <source>
        <strain>Crossbred X Angus</strain>
        <tissue>Ileum</tissue>
    </source>
</reference>
<reference key="3">
    <citation type="journal article" date="1992" name="J. Biochem.">
        <title>Structural organization and expression of the gene for bovine myosin I heavy chain.</title>
        <authorList>
            <person name="Kawakami H."/>
            <person name="Moriyoshi K."/>
            <person name="Utsumi T."/>
            <person name="Nakanishi S."/>
        </authorList>
    </citation>
    <scope>NUCLEOTIDE SEQUENCE [MRNA] OF 1-789</scope>
    <source>
        <tissue>Liver</tissue>
    </source>
</reference>
<evidence type="ECO:0000250" key="1"/>
<evidence type="ECO:0000250" key="2">
    <source>
        <dbReference type="UniProtKB" id="Q9UBC5"/>
    </source>
</evidence>
<evidence type="ECO:0000255" key="3"/>
<evidence type="ECO:0000255" key="4">
    <source>
        <dbReference type="PROSITE-ProRule" id="PRU00116"/>
    </source>
</evidence>
<evidence type="ECO:0000255" key="5">
    <source>
        <dbReference type="PROSITE-ProRule" id="PRU00782"/>
    </source>
</evidence>
<evidence type="ECO:0000255" key="6">
    <source>
        <dbReference type="PROSITE-ProRule" id="PRU01093"/>
    </source>
</evidence>
<evidence type="ECO:0000305" key="7"/>
<protein>
    <recommendedName>
        <fullName>Unconventional myosin-Ia</fullName>
    </recommendedName>
    <alternativeName>
        <fullName>Brush border 110 kDa protein</fullName>
    </alternativeName>
    <alternativeName>
        <fullName>Brush border myosin I</fullName>
        <shortName>BBM-I</shortName>
        <shortName>BBMI</shortName>
    </alternativeName>
    <alternativeName>
        <fullName>Myosin I heavy chain</fullName>
        <shortName>MIHC</shortName>
    </alternativeName>
</protein>
<sequence>MTLLEGSVGVEDLVLLEPLEQESLIRNLQLRYEKKEIYTYIGNVLVSVNPYQQLPIYDLEFVAKYRDYTFYELKPHIYALANMAYQSLRDRDRDQCILITGESGAGKTEASKLVMSYVAAVCGKGEQVNSVKEQLLQSNPVLEAFGNAKTIRNNNSSRFGKYMDIEFDFKGFPLGGVITNYLLEKSRVVKQLEGERNFHIFYQLLAGADAQLLKALKLERDTGGYAYLNPDTSRVDGMDDDANFKVLQSAMTVIGFSDEEIRQVLEVAALVLKLGNVELINEFQANGVPASGIRDGRGVQEIGELVGLNSVELERALCSRTMETAKEKVVTTLNVIQAQYARDALAKNIYSRLFNWLVNRINESIKVGTGEKRKVMGVLDIYGFEILEDNSFEQFVINYCNEKLQQVFIEMTLKEEQEEYKREGIPWVKVEYFDNGIICNLIEHNQRGILAMLDEECLRPGVVSDSTFLAKLNQLFSKHSHYESKVTQNAQRQYDHSMGLSCFRICHYAGKVTYNVNSFIDKNNDLLFRDLSQAMWKARHPLLRSLFPEGDPKQASLKRPPTAGAQFKSSVTTLMKNLYSKNPNYIRCIKPNEHQQRGHFSFELVSVQAQYLGLLENVRVRRAGYAYRQAYGSFLERYRLLSRSTWPRWNGGDQEGVEKVLGELSMSSEELAFGKTKIFIRSPKTLFYLEEQRRLRLQQLATLIQKTYRGWRCRTHYQLMRKSQIVISSWFRGNMQKKHYRKMKASALLIQAFVRGWKARKNYRKYFRSGAALILSNFIYKSMVQKFLLGLKNDLPSPSILDKKWPSAPYKYFNTANHELQRLFHQWKCKKFRDQLSPKQVEVLREKLCASELFKGKKASYPQSVPIPFHGDYIGLQRNPKLQKLKGGEEGPILMAETVVKVNRGNAKTSSRILLLTKGHVIITDMKNPQAKTVIPLNSLAGVSVTSFKDGLFSLHLSEISSVGSKGEFLLVSEHVIELLTKICRATLDATQMQLPVTVTEEFSVKFKEGSLTVKVIQGPGGGGTGKLSFKKKGSRCLEVTVQ</sequence>